<sequence>MAVSPTAKRKFHHPFRNLSRQSSSARTSAEAPPLPAVDQVLGGSADVSGGDQGGPGNTQPESPPAPLTRPPPPPPIFGSFSSSTCSFQSSISQEDAKPPYHPDTELKKVSRSLLRLQKYSLILGFVSINAGFIWALWNYHHYWYIFLPFLAANTFCQVIFAISNTIAATFTTLRRKLGFKKDVVPENPEKFVMVLPCYNEDRQEVETSLNSLINQQNIDEHPRLIMVIVDGNAKAPGEEVSTQDFLLNDMFAGGERIEFQNGYSARDGFFMPVTIQQGKYRGVPYIIIGKKHNQGKRDSLCFVRSFLWHYKNRSADISTMFNPDLFDYMGSILTDNGLDTIDYLCGMDGDTVFDDDCVYELIKALRRGGPDVVGVCGAVLVKFDEKPWGWWSVPSSQPPFFAWFTETNLRNRNLLQNTEYNLTQGLRREFQSRVSGKVNCLPGCCQLIRVQDATFGDAVLRERFGHVPKPNDTMTQQIMGVYSEDSIHASIIFSRHPKSQTRQALRARAYTTAPQSWSVYLSQRKRWALGSKSNEFVMVFRPGIIWVERLCSFITVTTWWLGPFVVAAMFGFAIALVRQGKKIFENHIMIGLMSVLAFRYAAKEKFKEKMPPV</sequence>
<comment type="function">
    <text evidence="4 7">Polymerizes chitin, a structural polymer of the cell wall and septum, by transferring the sugar moiety of UDP-GlcNAc to the non-reducing end of the growing chitin polymer (Probable). Plays a role in cell wall integrity (PubMed:35887437). Plays a key role in pathogenicity (PubMed:35887437). Likely contributes to post-penetration virulence (PubMed:35887437).</text>
</comment>
<comment type="catalytic activity">
    <reaction evidence="7">
        <text>[(1-&gt;4)-N-acetyl-beta-D-glucosaminyl](n) + UDP-N-acetyl-alpha-D-glucosamine = [(1-&gt;4)-N-acetyl-beta-D-glucosaminyl](n+1) + UDP + H(+)</text>
        <dbReference type="Rhea" id="RHEA:16637"/>
        <dbReference type="Rhea" id="RHEA-COMP:9593"/>
        <dbReference type="Rhea" id="RHEA-COMP:9595"/>
        <dbReference type="ChEBI" id="CHEBI:15378"/>
        <dbReference type="ChEBI" id="CHEBI:17029"/>
        <dbReference type="ChEBI" id="CHEBI:57705"/>
        <dbReference type="ChEBI" id="CHEBI:58223"/>
        <dbReference type="EC" id="2.4.1.16"/>
    </reaction>
    <physiologicalReaction direction="left-to-right" evidence="7">
        <dbReference type="Rhea" id="RHEA:16638"/>
    </physiologicalReaction>
</comment>
<comment type="subcellular location">
    <subcellularLocation>
        <location evidence="6">Cell membrane</location>
        <topology evidence="1">Multi-pass membrane protein</topology>
    </subcellularLocation>
</comment>
<comment type="disruption phenotype">
    <text evidence="4">Significantly impairs conidiation (PubMed:35887437). Exhibits a significant reduced pathogenicity in Arabidopsis and cotton plants (PubMed:35887437).</text>
</comment>
<comment type="similarity">
    <text evidence="6">Belongs to the chitin synthase family.</text>
</comment>
<keyword id="KW-1003">Cell membrane</keyword>
<keyword id="KW-0325">Glycoprotein</keyword>
<keyword id="KW-0328">Glycosyltransferase</keyword>
<keyword id="KW-0472">Membrane</keyword>
<keyword id="KW-1185">Reference proteome</keyword>
<keyword id="KW-0808">Transferase</keyword>
<keyword id="KW-0812">Transmembrane</keyword>
<keyword id="KW-1133">Transmembrane helix</keyword>
<keyword id="KW-0843">Virulence</keyword>
<organism>
    <name type="scientific">Verticillium dahliae (strain VdLs.17 / ATCC MYA-4575 / FGSC 10137)</name>
    <name type="common">Verticillium wilt</name>
    <dbReference type="NCBI Taxonomy" id="498257"/>
    <lineage>
        <taxon>Eukaryota</taxon>
        <taxon>Fungi</taxon>
        <taxon>Dikarya</taxon>
        <taxon>Ascomycota</taxon>
        <taxon>Pezizomycotina</taxon>
        <taxon>Sordariomycetes</taxon>
        <taxon>Hypocreomycetidae</taxon>
        <taxon>Glomerellales</taxon>
        <taxon>Plectosphaerellaceae</taxon>
        <taxon>Verticillium</taxon>
    </lineage>
</organism>
<accession>G2X5A0</accession>
<dbReference type="EC" id="2.4.1.16" evidence="7"/>
<dbReference type="EMBL" id="DS572704">
    <property type="protein sequence ID" value="EGY14241.1"/>
    <property type="molecule type" value="Genomic_DNA"/>
</dbReference>
<dbReference type="RefSeq" id="XP_009650595.1">
    <property type="nucleotide sequence ID" value="XM_009652300.1"/>
</dbReference>
<dbReference type="STRING" id="498257.G2X5A0"/>
<dbReference type="EnsemblFungi" id="EGY14241">
    <property type="protein sequence ID" value="EGY14241"/>
    <property type="gene ID" value="VDAG_05405"/>
</dbReference>
<dbReference type="GeneID" id="20706868"/>
<dbReference type="KEGG" id="vda:VDAG_05405"/>
<dbReference type="eggNOG" id="KOG2571">
    <property type="taxonomic scope" value="Eukaryota"/>
</dbReference>
<dbReference type="HOGENOM" id="CLU_013022_2_1_1"/>
<dbReference type="InParanoid" id="G2X5A0"/>
<dbReference type="OMA" id="WGKTRIA"/>
<dbReference type="OrthoDB" id="20841at1028384"/>
<dbReference type="PHI-base" id="PHI:123310"/>
<dbReference type="Proteomes" id="UP000001611">
    <property type="component" value="Chromosome 2"/>
</dbReference>
<dbReference type="GO" id="GO:0030428">
    <property type="term" value="C:cell septum"/>
    <property type="evidence" value="ECO:0007669"/>
    <property type="project" value="TreeGrafter"/>
</dbReference>
<dbReference type="GO" id="GO:0005886">
    <property type="term" value="C:plasma membrane"/>
    <property type="evidence" value="ECO:0007669"/>
    <property type="project" value="UniProtKB-SubCell"/>
</dbReference>
<dbReference type="GO" id="GO:0004100">
    <property type="term" value="F:chitin synthase activity"/>
    <property type="evidence" value="ECO:0007669"/>
    <property type="project" value="UniProtKB-EC"/>
</dbReference>
<dbReference type="GO" id="GO:0006031">
    <property type="term" value="P:chitin biosynthetic process"/>
    <property type="evidence" value="ECO:0007669"/>
    <property type="project" value="TreeGrafter"/>
</dbReference>
<dbReference type="GO" id="GO:0031505">
    <property type="term" value="P:fungal-type cell wall organization"/>
    <property type="evidence" value="ECO:0007669"/>
    <property type="project" value="TreeGrafter"/>
</dbReference>
<dbReference type="Gene3D" id="3.90.550.10">
    <property type="entry name" value="Spore Coat Polysaccharide Biosynthesis Protein SpsA, Chain A"/>
    <property type="match status" value="1"/>
</dbReference>
<dbReference type="InterPro" id="IPR004835">
    <property type="entry name" value="Chitin_synth"/>
</dbReference>
<dbReference type="InterPro" id="IPR029044">
    <property type="entry name" value="Nucleotide-diphossugar_trans"/>
</dbReference>
<dbReference type="PANTHER" id="PTHR22914">
    <property type="entry name" value="CHITIN SYNTHASE"/>
    <property type="match status" value="1"/>
</dbReference>
<dbReference type="PANTHER" id="PTHR22914:SF13">
    <property type="entry name" value="CHITIN SYNTHASE"/>
    <property type="match status" value="1"/>
</dbReference>
<dbReference type="Pfam" id="PF03142">
    <property type="entry name" value="Chitin_synth_2"/>
    <property type="match status" value="2"/>
</dbReference>
<dbReference type="SUPFAM" id="SSF53448">
    <property type="entry name" value="Nucleotide-diphospho-sugar transferases"/>
    <property type="match status" value="1"/>
</dbReference>
<reference key="1">
    <citation type="journal article" date="2011" name="PLoS Pathog.">
        <title>Comparative genomics yields insights into niche adaptation of plant vascular wilt pathogens.</title>
        <authorList>
            <person name="Klosterman S.J."/>
            <person name="Subbarao K.V."/>
            <person name="Kang S."/>
            <person name="Veronese P."/>
            <person name="Gold S.E."/>
            <person name="Thomma B.P.H.J."/>
            <person name="Chen Z."/>
            <person name="Henrissat B."/>
            <person name="Lee Y.-H."/>
            <person name="Park J."/>
            <person name="Garcia-Pedrajas M.D."/>
            <person name="Barbara D.J."/>
            <person name="Anchieta A."/>
            <person name="de Jonge R."/>
            <person name="Santhanam P."/>
            <person name="Maruthachalam K."/>
            <person name="Atallah Z."/>
            <person name="Amyotte S.G."/>
            <person name="Paz Z."/>
            <person name="Inderbitzin P."/>
            <person name="Hayes R.J."/>
            <person name="Heiman D.I."/>
            <person name="Young S."/>
            <person name="Zeng Q."/>
            <person name="Engels R."/>
            <person name="Galagan J."/>
            <person name="Cuomo C.A."/>
            <person name="Dobinson K.F."/>
            <person name="Ma L.-J."/>
        </authorList>
    </citation>
    <scope>NUCLEOTIDE SEQUENCE [LARGE SCALE GENOMIC DNA]</scope>
    <source>
        <strain>VdLs.17 / ATCC MYA-4575 / FGSC 10137</strain>
    </source>
</reference>
<reference key="2">
    <citation type="journal article" date="2022" name="J. Fungi">
        <title>Chitin Synthase Genes Are Differentially Required for Growth, Stress Response, and Virulence in Verticillium dahliae.</title>
        <authorList>
            <person name="Qin J."/>
            <person name="Zhao P."/>
            <person name="Ye Z."/>
            <person name="Sun L."/>
            <person name="Hu X."/>
            <person name="Zhang J."/>
        </authorList>
    </citation>
    <scope>FUNCTION</scope>
    <scope>INDUCTION</scope>
    <scope>DISRUPTION PHENOTYPE</scope>
</reference>
<protein>
    <recommendedName>
        <fullName evidence="5">Chitin synthase 8</fullName>
        <ecNumber evidence="7">2.4.1.16</ecNumber>
    </recommendedName>
    <alternativeName>
        <fullName evidence="6">Chitin-UDP acetyl-glucosaminyl transferase 8</fullName>
    </alternativeName>
</protein>
<evidence type="ECO:0000255" key="1"/>
<evidence type="ECO:0000255" key="2">
    <source>
        <dbReference type="PROSITE-ProRule" id="PRU00498"/>
    </source>
</evidence>
<evidence type="ECO:0000256" key="3">
    <source>
        <dbReference type="SAM" id="MobiDB-lite"/>
    </source>
</evidence>
<evidence type="ECO:0000269" key="4">
    <source>
    </source>
</evidence>
<evidence type="ECO:0000303" key="5">
    <source>
    </source>
</evidence>
<evidence type="ECO:0000305" key="6"/>
<evidence type="ECO:0000305" key="7">
    <source>
    </source>
</evidence>
<name>CHS8_VERDV</name>
<gene>
    <name evidence="5" type="primary">CHS8</name>
    <name type="ORF">VDAG_05405</name>
</gene>
<feature type="chain" id="PRO_0000460807" description="Chitin synthase 8">
    <location>
        <begin position="1"/>
        <end position="613"/>
    </location>
</feature>
<feature type="transmembrane region" description="Helical" evidence="1">
    <location>
        <begin position="119"/>
        <end position="139"/>
    </location>
</feature>
<feature type="transmembrane region" description="Helical" evidence="1">
    <location>
        <begin position="142"/>
        <end position="162"/>
    </location>
</feature>
<feature type="transmembrane region" description="Helical" evidence="1">
    <location>
        <begin position="556"/>
        <end position="576"/>
    </location>
</feature>
<feature type="transmembrane region" description="Helical" evidence="1">
    <location>
        <begin position="583"/>
        <end position="602"/>
    </location>
</feature>
<feature type="region of interest" description="Disordered" evidence="3">
    <location>
        <begin position="1"/>
        <end position="73"/>
    </location>
</feature>
<feature type="compositionally biased region" description="Polar residues" evidence="3">
    <location>
        <begin position="18"/>
        <end position="27"/>
    </location>
</feature>
<feature type="compositionally biased region" description="Pro residues" evidence="3">
    <location>
        <begin position="61"/>
        <end position="73"/>
    </location>
</feature>
<feature type="glycosylation site" description="N-linked (GlcNAc...) asparagine" evidence="2">
    <location>
        <position position="17"/>
    </location>
</feature>
<feature type="glycosylation site" description="N-linked (GlcNAc...) asparagine" evidence="2">
    <location>
        <position position="312"/>
    </location>
</feature>
<feature type="glycosylation site" description="N-linked (GlcNAc...) asparagine" evidence="2">
    <location>
        <position position="421"/>
    </location>
</feature>
<feature type="glycosylation site" description="N-linked (GlcNAc...) asparagine" evidence="2">
    <location>
        <position position="471"/>
    </location>
</feature>
<proteinExistence type="evidence at transcript level"/>